<keyword id="KW-0963">Cytoplasm</keyword>
<keyword id="KW-0489">Methyltransferase</keyword>
<keyword id="KW-0698">rRNA processing</keyword>
<keyword id="KW-0949">S-adenosyl-L-methionine</keyword>
<keyword id="KW-0808">Transferase</keyword>
<proteinExistence type="inferred from homology"/>
<comment type="function">
    <text evidence="1">Specifically methylates the guanine in position 1207 of 16S rRNA in the 30S particle.</text>
</comment>
<comment type="catalytic activity">
    <reaction evidence="1">
        <text>guanosine(1207) in 16S rRNA + S-adenosyl-L-methionine = N(2)-methylguanosine(1207) in 16S rRNA + S-adenosyl-L-homocysteine + H(+)</text>
        <dbReference type="Rhea" id="RHEA:42736"/>
        <dbReference type="Rhea" id="RHEA-COMP:10213"/>
        <dbReference type="Rhea" id="RHEA-COMP:10214"/>
        <dbReference type="ChEBI" id="CHEBI:15378"/>
        <dbReference type="ChEBI" id="CHEBI:57856"/>
        <dbReference type="ChEBI" id="CHEBI:59789"/>
        <dbReference type="ChEBI" id="CHEBI:74269"/>
        <dbReference type="ChEBI" id="CHEBI:74481"/>
        <dbReference type="EC" id="2.1.1.172"/>
    </reaction>
</comment>
<comment type="subunit">
    <text evidence="1">Monomer.</text>
</comment>
<comment type="subcellular location">
    <subcellularLocation>
        <location evidence="1">Cytoplasm</location>
    </subcellularLocation>
</comment>
<comment type="similarity">
    <text evidence="1">Belongs to the methyltransferase superfamily. RsmC family.</text>
</comment>
<dbReference type="EC" id="2.1.1.172" evidence="1"/>
<dbReference type="EMBL" id="CP000949">
    <property type="protein sequence ID" value="ACA74907.1"/>
    <property type="molecule type" value="Genomic_DNA"/>
</dbReference>
<dbReference type="SMR" id="B1JEN3"/>
<dbReference type="STRING" id="390235.PputW619_4427"/>
<dbReference type="KEGG" id="ppw:PputW619_4427"/>
<dbReference type="eggNOG" id="COG2813">
    <property type="taxonomic scope" value="Bacteria"/>
</dbReference>
<dbReference type="HOGENOM" id="CLU_049581_0_0_6"/>
<dbReference type="OrthoDB" id="9816072at2"/>
<dbReference type="GO" id="GO:0005737">
    <property type="term" value="C:cytoplasm"/>
    <property type="evidence" value="ECO:0007669"/>
    <property type="project" value="UniProtKB-SubCell"/>
</dbReference>
<dbReference type="GO" id="GO:0052914">
    <property type="term" value="F:16S rRNA (guanine(1207)-N(2))-methyltransferase activity"/>
    <property type="evidence" value="ECO:0007669"/>
    <property type="project" value="UniProtKB-EC"/>
</dbReference>
<dbReference type="GO" id="GO:0003676">
    <property type="term" value="F:nucleic acid binding"/>
    <property type="evidence" value="ECO:0007669"/>
    <property type="project" value="InterPro"/>
</dbReference>
<dbReference type="CDD" id="cd02440">
    <property type="entry name" value="AdoMet_MTases"/>
    <property type="match status" value="1"/>
</dbReference>
<dbReference type="Gene3D" id="3.40.50.150">
    <property type="entry name" value="Vaccinia Virus protein VP39"/>
    <property type="match status" value="2"/>
</dbReference>
<dbReference type="HAMAP" id="MF_01862">
    <property type="entry name" value="16SrRNA_methyltr_C"/>
    <property type="match status" value="1"/>
</dbReference>
<dbReference type="InterPro" id="IPR002052">
    <property type="entry name" value="DNA_methylase_N6_adenine_CS"/>
</dbReference>
<dbReference type="InterPro" id="IPR013675">
    <property type="entry name" value="Mtase_sm_N"/>
</dbReference>
<dbReference type="InterPro" id="IPR023543">
    <property type="entry name" value="rRNA_ssu_MeTfrase_C"/>
</dbReference>
<dbReference type="InterPro" id="IPR046977">
    <property type="entry name" value="RsmC/RlmG"/>
</dbReference>
<dbReference type="InterPro" id="IPR029063">
    <property type="entry name" value="SAM-dependent_MTases_sf"/>
</dbReference>
<dbReference type="InterPro" id="IPR007848">
    <property type="entry name" value="Small_mtfrase_dom"/>
</dbReference>
<dbReference type="PANTHER" id="PTHR47816">
    <property type="entry name" value="RIBOSOMAL RNA SMALL SUBUNIT METHYLTRANSFERASE C"/>
    <property type="match status" value="1"/>
</dbReference>
<dbReference type="PANTHER" id="PTHR47816:SF4">
    <property type="entry name" value="RIBOSOMAL RNA SMALL SUBUNIT METHYLTRANSFERASE C"/>
    <property type="match status" value="1"/>
</dbReference>
<dbReference type="Pfam" id="PF05175">
    <property type="entry name" value="MTS"/>
    <property type="match status" value="1"/>
</dbReference>
<dbReference type="Pfam" id="PF08468">
    <property type="entry name" value="MTS_N"/>
    <property type="match status" value="1"/>
</dbReference>
<dbReference type="SUPFAM" id="SSF53335">
    <property type="entry name" value="S-adenosyl-L-methionine-dependent methyltransferases"/>
    <property type="match status" value="1"/>
</dbReference>
<accession>B1JEN3</accession>
<organism>
    <name type="scientific">Pseudomonas putida (strain W619)</name>
    <dbReference type="NCBI Taxonomy" id="390235"/>
    <lineage>
        <taxon>Bacteria</taxon>
        <taxon>Pseudomonadati</taxon>
        <taxon>Pseudomonadota</taxon>
        <taxon>Gammaproteobacteria</taxon>
        <taxon>Pseudomonadales</taxon>
        <taxon>Pseudomonadaceae</taxon>
        <taxon>Pseudomonas</taxon>
    </lineage>
</organism>
<evidence type="ECO:0000255" key="1">
    <source>
        <dbReference type="HAMAP-Rule" id="MF_01862"/>
    </source>
</evidence>
<protein>
    <recommendedName>
        <fullName evidence="1">Ribosomal RNA small subunit methyltransferase C</fullName>
        <ecNumber evidence="1">2.1.1.172</ecNumber>
    </recommendedName>
    <alternativeName>
        <fullName evidence="1">16S rRNA m2G1207 methyltransferase</fullName>
    </alternativeName>
    <alternativeName>
        <fullName evidence="1">rRNA (guanine-N(2)-)-methyltransferase RsmC</fullName>
    </alternativeName>
</protein>
<sequence>MDPRSEVLLRQADLFQGPLLIAGAPADDLLGQLPKANAWTWHAGDQAMLDARFAGRSHYGVDVPPVAFEAAVLFLPKSRELAAYLLNALASRLGGGELYLVGEKRGGIEGAAKHLQALGKPRKLDSARHCQLWQVTVDNAPEAKPLESLAERFALELEDGPLQVVSLPGVFSHGRLDRGTALLLKHLDNLPVGHVLDFGCGAGVLGATVKRRYPQSRVTMLDVDAFAVAASRLTLAANKLEGEVISGDGIDAAPGDLSLILSNPPFHTGVHTNYQASENLLKKSGQHLRKGGEMRLVANSFLRYQPLIEGALGNCRTCAEADGFRIYQATR</sequence>
<reference key="1">
    <citation type="submission" date="2008-02" db="EMBL/GenBank/DDBJ databases">
        <title>Complete sequence of Pseudomonas putida W619.</title>
        <authorList>
            <person name="Copeland A."/>
            <person name="Lucas S."/>
            <person name="Lapidus A."/>
            <person name="Barry K."/>
            <person name="Detter J.C."/>
            <person name="Glavina del Rio T."/>
            <person name="Dalin E."/>
            <person name="Tice H."/>
            <person name="Pitluck S."/>
            <person name="Chain P."/>
            <person name="Malfatti S."/>
            <person name="Shin M."/>
            <person name="Vergez L."/>
            <person name="Schmutz J."/>
            <person name="Larimer F."/>
            <person name="Land M."/>
            <person name="Hauser L."/>
            <person name="Kyrpides N."/>
            <person name="Kim E."/>
            <person name="Taghavi S."/>
            <person name="Vangronsveld D."/>
            <person name="van der Lelie D."/>
            <person name="Richardson P."/>
        </authorList>
    </citation>
    <scope>NUCLEOTIDE SEQUENCE [LARGE SCALE GENOMIC DNA]</scope>
    <source>
        <strain>W619</strain>
    </source>
</reference>
<feature type="chain" id="PRO_0000369745" description="Ribosomal RNA small subunit methyltransferase C">
    <location>
        <begin position="1"/>
        <end position="331"/>
    </location>
</feature>
<gene>
    <name evidence="1" type="primary">rsmC</name>
    <name type="ordered locus">PputW619_4427</name>
</gene>
<name>RSMC_PSEPW</name>